<sequence length="184" mass="20475">MAKHNEKELADTSKFLSFVLRHKPEAIGIVLDREGWADIDKLILCAQKAGKRLTRALLDTVVATSDKKRFSYSSDGRCIRAVQGHSTSQVAISFAEKTPPQFLYHGTASRFLDEIKKQGLIAGDRHYVHLSADEATARKVGARHGSPVVLTVKAQEMAKRGIPFWQAENGVWLTSTVAVEFLEW</sequence>
<keyword id="KW-0520">NAD</keyword>
<keyword id="KW-1185">Reference proteome</keyword>
<keyword id="KW-0808">Transferase</keyword>
<feature type="chain" id="PRO_1000115315" description="Probable RNA 2'-phosphotransferase">
    <location>
        <begin position="1"/>
        <end position="184"/>
    </location>
</feature>
<gene>
    <name evidence="1" type="primary">kptA</name>
    <name type="ordered locus">SbBS512_E4774</name>
</gene>
<comment type="function">
    <text evidence="1">Removes the 2'-phosphate from RNA via an intermediate in which the phosphate is ADP-ribosylated by NAD followed by a presumed transesterification to release the RNA and generate ADP-ribose 1''-2''-cyclic phosphate (APPR&gt;P). May function as an ADP-ribosylase.</text>
</comment>
<comment type="similarity">
    <text evidence="1">Belongs to the KptA/TPT1 family.</text>
</comment>
<protein>
    <recommendedName>
        <fullName evidence="1">Probable RNA 2'-phosphotransferase</fullName>
        <ecNumber evidence="1">2.7.1.-</ecNumber>
    </recommendedName>
</protein>
<proteinExistence type="inferred from homology"/>
<evidence type="ECO:0000255" key="1">
    <source>
        <dbReference type="HAMAP-Rule" id="MF_00299"/>
    </source>
</evidence>
<name>KPTA_SHIB3</name>
<organism>
    <name type="scientific">Shigella boydii serotype 18 (strain CDC 3083-94 / BS512)</name>
    <dbReference type="NCBI Taxonomy" id="344609"/>
    <lineage>
        <taxon>Bacteria</taxon>
        <taxon>Pseudomonadati</taxon>
        <taxon>Pseudomonadota</taxon>
        <taxon>Gammaproteobacteria</taxon>
        <taxon>Enterobacterales</taxon>
        <taxon>Enterobacteriaceae</taxon>
        <taxon>Shigella</taxon>
    </lineage>
</organism>
<dbReference type="EC" id="2.7.1.-" evidence="1"/>
<dbReference type="EMBL" id="CP001063">
    <property type="protein sequence ID" value="ACD06558.1"/>
    <property type="molecule type" value="Genomic_DNA"/>
</dbReference>
<dbReference type="RefSeq" id="WP_004988466.1">
    <property type="nucleotide sequence ID" value="NC_010658.1"/>
</dbReference>
<dbReference type="SMR" id="B2TYV0"/>
<dbReference type="STRING" id="344609.SbBS512_E4774"/>
<dbReference type="KEGG" id="sbc:SbBS512_E4774"/>
<dbReference type="HOGENOM" id="CLU_052998_4_0_6"/>
<dbReference type="Proteomes" id="UP000001030">
    <property type="component" value="Chromosome"/>
</dbReference>
<dbReference type="GO" id="GO:0003950">
    <property type="term" value="F:NAD+ poly-ADP-ribosyltransferase activity"/>
    <property type="evidence" value="ECO:0007669"/>
    <property type="project" value="InterPro"/>
</dbReference>
<dbReference type="GO" id="GO:0000215">
    <property type="term" value="F:tRNA 2'-phosphotransferase activity"/>
    <property type="evidence" value="ECO:0007669"/>
    <property type="project" value="TreeGrafter"/>
</dbReference>
<dbReference type="GO" id="GO:0006388">
    <property type="term" value="P:tRNA splicing, via endonucleolytic cleavage and ligation"/>
    <property type="evidence" value="ECO:0007669"/>
    <property type="project" value="UniProtKB-UniRule"/>
</dbReference>
<dbReference type="FunFam" id="1.10.10.970:FF:000001">
    <property type="entry name" value="RNA 2'-phosphotransferase"/>
    <property type="match status" value="1"/>
</dbReference>
<dbReference type="FunFam" id="3.20.170.30:FF:000001">
    <property type="entry name" value="RNA 2'-phosphotransferase"/>
    <property type="match status" value="1"/>
</dbReference>
<dbReference type="Gene3D" id="3.20.170.30">
    <property type="match status" value="1"/>
</dbReference>
<dbReference type="Gene3D" id="1.10.10.970">
    <property type="entry name" value="RNA 2'-phosphotransferase, Tpt1/KptA family, N-terminal domain"/>
    <property type="match status" value="1"/>
</dbReference>
<dbReference type="HAMAP" id="MF_00299">
    <property type="entry name" value="KptA"/>
    <property type="match status" value="1"/>
</dbReference>
<dbReference type="InterPro" id="IPR002745">
    <property type="entry name" value="Ptrans_KptA/Tpt1"/>
</dbReference>
<dbReference type="InterPro" id="IPR042081">
    <property type="entry name" value="RNA_2'-PTrans_C"/>
</dbReference>
<dbReference type="InterPro" id="IPR022928">
    <property type="entry name" value="RNA_2'-PTrans_KptA"/>
</dbReference>
<dbReference type="InterPro" id="IPR042080">
    <property type="entry name" value="RNA_2'-PTrans_N"/>
</dbReference>
<dbReference type="NCBIfam" id="NF002012">
    <property type="entry name" value="PRK00819.1-1"/>
    <property type="match status" value="1"/>
</dbReference>
<dbReference type="NCBIfam" id="NF002014">
    <property type="entry name" value="PRK00819.1-4"/>
    <property type="match status" value="1"/>
</dbReference>
<dbReference type="PANTHER" id="PTHR12684">
    <property type="entry name" value="PUTATIVE PHOSPHOTRANSFERASE"/>
    <property type="match status" value="1"/>
</dbReference>
<dbReference type="PANTHER" id="PTHR12684:SF2">
    <property type="entry name" value="TRNA 2'-PHOSPHOTRANSFERASE 1"/>
    <property type="match status" value="1"/>
</dbReference>
<dbReference type="Pfam" id="PF01885">
    <property type="entry name" value="PTS_2-RNA"/>
    <property type="match status" value="1"/>
</dbReference>
<dbReference type="SUPFAM" id="SSF56399">
    <property type="entry name" value="ADP-ribosylation"/>
    <property type="match status" value="1"/>
</dbReference>
<accession>B2TYV0</accession>
<reference key="1">
    <citation type="submission" date="2008-05" db="EMBL/GenBank/DDBJ databases">
        <title>Complete sequence of Shigella boydii serotype 18 strain BS512.</title>
        <authorList>
            <person name="Rasko D.A."/>
            <person name="Rosovitz M."/>
            <person name="Maurelli A.T."/>
            <person name="Myers G."/>
            <person name="Seshadri R."/>
            <person name="Cer R."/>
            <person name="Jiang L."/>
            <person name="Ravel J."/>
            <person name="Sebastian Y."/>
        </authorList>
    </citation>
    <scope>NUCLEOTIDE SEQUENCE [LARGE SCALE GENOMIC DNA]</scope>
    <source>
        <strain>CDC 3083-94 / BS512</strain>
    </source>
</reference>